<name>U496A_ORYSJ</name>
<comment type="subcellular location">
    <subcellularLocation>
        <location evidence="3">Membrane</location>
        <topology evidence="3">Multi-pass membrane protein</topology>
    </subcellularLocation>
</comment>
<comment type="similarity">
    <text evidence="3">Belongs to the UPF0496 family.</text>
</comment>
<sequence length="388" mass="43093">MGNSSSSGSHRPPRPASSESALPPAAAAAEELSSYEAACRSDPELRTFDTTLQRRTSRAISTLAVGVEVRSLSLESLREVTGCLLDMNQEVVRVILDCKKDIWKSPELFDLVEDYFESSLHTLDFCTALDKCLKRARDSQLLLHVALQRFDDEEDNDAAAAGQEDAAPSARYARTLHELRQFKAAGDPFTEEFFSAFQAVYRQQLTMLEKLQQRKHRLDKKVRAIKAWRRVSSIIFATTFAAVLICSVVAAAIAAPPVAAALAAAASIPVGSMGKWIDSLLKGYQDALRGQKEVVSAMQVGTFIAIKDLDSIRVLINRVELEISSMIDCVEFAERDEEAVKFGVEEIKKKLEVFMKSVEDLGEQADRCSRDIRRARTVVLQRIIRHPS</sequence>
<feature type="chain" id="PRO_0000306905" description="UPF0496 protein 1">
    <location>
        <begin position="1"/>
        <end position="388"/>
    </location>
</feature>
<feature type="transmembrane region" description="Helical" evidence="1">
    <location>
        <begin position="234"/>
        <end position="254"/>
    </location>
</feature>
<feature type="transmembrane region" description="Helical" evidence="1">
    <location>
        <begin position="257"/>
        <end position="277"/>
    </location>
</feature>
<feature type="region of interest" description="Disordered" evidence="2">
    <location>
        <begin position="1"/>
        <end position="25"/>
    </location>
</feature>
<feature type="coiled-coil region" evidence="1">
    <location>
        <begin position="198"/>
        <end position="227"/>
    </location>
</feature>
<feature type="coiled-coil region" evidence="1">
    <location>
        <begin position="344"/>
        <end position="376"/>
    </location>
</feature>
<feature type="sequence conflict" description="In Ref. 6; AK069890." evidence="3" ref="6">
    <original>I</original>
    <variation>V</variation>
    <location>
        <position position="277"/>
    </location>
</feature>
<accession>Q10QE9</accession>
<accession>A0A0P0VU70</accession>
<protein>
    <recommendedName>
        <fullName>UPF0496 protein 1</fullName>
    </recommendedName>
</protein>
<organism>
    <name type="scientific">Oryza sativa subsp. japonica</name>
    <name type="common">Rice</name>
    <dbReference type="NCBI Taxonomy" id="39947"/>
    <lineage>
        <taxon>Eukaryota</taxon>
        <taxon>Viridiplantae</taxon>
        <taxon>Streptophyta</taxon>
        <taxon>Embryophyta</taxon>
        <taxon>Tracheophyta</taxon>
        <taxon>Spermatophyta</taxon>
        <taxon>Magnoliopsida</taxon>
        <taxon>Liliopsida</taxon>
        <taxon>Poales</taxon>
        <taxon>Poaceae</taxon>
        <taxon>BOP clade</taxon>
        <taxon>Oryzoideae</taxon>
        <taxon>Oryzeae</taxon>
        <taxon>Oryzinae</taxon>
        <taxon>Oryza</taxon>
        <taxon>Oryza sativa</taxon>
    </lineage>
</organism>
<evidence type="ECO:0000255" key="1"/>
<evidence type="ECO:0000256" key="2">
    <source>
        <dbReference type="SAM" id="MobiDB-lite"/>
    </source>
</evidence>
<evidence type="ECO:0000305" key="3"/>
<proteinExistence type="evidence at transcript level"/>
<keyword id="KW-0175">Coiled coil</keyword>
<keyword id="KW-0472">Membrane</keyword>
<keyword id="KW-1185">Reference proteome</keyword>
<keyword id="KW-0812">Transmembrane</keyword>
<keyword id="KW-1133">Transmembrane helix</keyword>
<gene>
    <name type="ordered locus">Os03g0199100</name>
    <name type="ordered locus">LOC_Os03g10240</name>
    <name type="ORF">OsJ_009426</name>
</gene>
<dbReference type="EMBL" id="DP000009">
    <property type="protein sequence ID" value="ABF94480.1"/>
    <property type="molecule type" value="Genomic_DNA"/>
</dbReference>
<dbReference type="EMBL" id="AP008209">
    <property type="protein sequence ID" value="BAF11197.1"/>
    <property type="molecule type" value="Genomic_DNA"/>
</dbReference>
<dbReference type="EMBL" id="AP014959">
    <property type="protein sequence ID" value="BAS82800.1"/>
    <property type="molecule type" value="Genomic_DNA"/>
</dbReference>
<dbReference type="EMBL" id="CM000140">
    <property type="protein sequence ID" value="EAZ25943.1"/>
    <property type="molecule type" value="Genomic_DNA"/>
</dbReference>
<dbReference type="EMBL" id="AK069890">
    <property type="status" value="NOT_ANNOTATED_CDS"/>
    <property type="molecule type" value="mRNA"/>
</dbReference>
<dbReference type="RefSeq" id="XP_015632599.1">
    <property type="nucleotide sequence ID" value="XM_015777113.1"/>
</dbReference>
<dbReference type="SMR" id="Q10QE9"/>
<dbReference type="FunCoup" id="Q10QE9">
    <property type="interactions" value="1070"/>
</dbReference>
<dbReference type="STRING" id="39947.Q10QE9"/>
<dbReference type="PaxDb" id="39947-Q10QE9"/>
<dbReference type="EnsemblPlants" id="Os03t0199100-01">
    <property type="protein sequence ID" value="Os03t0199100-01"/>
    <property type="gene ID" value="Os03g0199100"/>
</dbReference>
<dbReference type="Gramene" id="Os03t0199100-01">
    <property type="protein sequence ID" value="Os03t0199100-01"/>
    <property type="gene ID" value="Os03g0199100"/>
</dbReference>
<dbReference type="KEGG" id="dosa:Os03g0199100"/>
<dbReference type="eggNOG" id="ENOG502QQBT">
    <property type="taxonomic scope" value="Eukaryota"/>
</dbReference>
<dbReference type="HOGENOM" id="CLU_044778_0_0_1"/>
<dbReference type="InParanoid" id="Q10QE9"/>
<dbReference type="OMA" id="KYLRTME"/>
<dbReference type="OrthoDB" id="679959at2759"/>
<dbReference type="Proteomes" id="UP000000763">
    <property type="component" value="Chromosome 3"/>
</dbReference>
<dbReference type="Proteomes" id="UP000007752">
    <property type="component" value="Chromosome 3"/>
</dbReference>
<dbReference type="Proteomes" id="UP000059680">
    <property type="component" value="Chromosome 3"/>
</dbReference>
<dbReference type="GO" id="GO:0016020">
    <property type="term" value="C:membrane"/>
    <property type="evidence" value="ECO:0007669"/>
    <property type="project" value="UniProtKB-SubCell"/>
</dbReference>
<dbReference type="InterPro" id="IPR007749">
    <property type="entry name" value="DUF677"/>
</dbReference>
<dbReference type="PANTHER" id="PTHR31113:SF3">
    <property type="entry name" value="UPF0496 PROTEIN 1"/>
    <property type="match status" value="1"/>
</dbReference>
<dbReference type="PANTHER" id="PTHR31113">
    <property type="entry name" value="UPF0496 PROTEIN 3-RELATED"/>
    <property type="match status" value="1"/>
</dbReference>
<dbReference type="Pfam" id="PF05055">
    <property type="entry name" value="DUF677"/>
    <property type="match status" value="1"/>
</dbReference>
<reference key="1">
    <citation type="journal article" date="2005" name="Genome Res.">
        <title>Sequence, annotation, and analysis of synteny between rice chromosome 3 and diverged grass species.</title>
        <authorList>
            <consortium name="The rice chromosome 3 sequencing consortium"/>
            <person name="Buell C.R."/>
            <person name="Yuan Q."/>
            <person name="Ouyang S."/>
            <person name="Liu J."/>
            <person name="Zhu W."/>
            <person name="Wang A."/>
            <person name="Maiti R."/>
            <person name="Haas B."/>
            <person name="Wortman J."/>
            <person name="Pertea M."/>
            <person name="Jones K.M."/>
            <person name="Kim M."/>
            <person name="Overton L."/>
            <person name="Tsitrin T."/>
            <person name="Fadrosh D."/>
            <person name="Bera J."/>
            <person name="Weaver B."/>
            <person name="Jin S."/>
            <person name="Johri S."/>
            <person name="Reardon M."/>
            <person name="Webb K."/>
            <person name="Hill J."/>
            <person name="Moffat K."/>
            <person name="Tallon L."/>
            <person name="Van Aken S."/>
            <person name="Lewis M."/>
            <person name="Utterback T."/>
            <person name="Feldblyum T."/>
            <person name="Zismann V."/>
            <person name="Iobst S."/>
            <person name="Hsiao J."/>
            <person name="de Vazeille A.R."/>
            <person name="Salzberg S.L."/>
            <person name="White O."/>
            <person name="Fraser C.M."/>
            <person name="Yu Y."/>
            <person name="Kim H."/>
            <person name="Rambo T."/>
            <person name="Currie J."/>
            <person name="Collura K."/>
            <person name="Kernodle-Thompson S."/>
            <person name="Wei F."/>
            <person name="Kudrna K."/>
            <person name="Ammiraju J.S.S."/>
            <person name="Luo M."/>
            <person name="Goicoechea J.L."/>
            <person name="Wing R.A."/>
            <person name="Henry D."/>
            <person name="Oates R."/>
            <person name="Palmer M."/>
            <person name="Pries G."/>
            <person name="Saski C."/>
            <person name="Simmons J."/>
            <person name="Soderlund C."/>
            <person name="Nelson W."/>
            <person name="de la Bastide M."/>
            <person name="Spiegel L."/>
            <person name="Nascimento L."/>
            <person name="Huang E."/>
            <person name="Preston R."/>
            <person name="Zutavern T."/>
            <person name="Palmer L."/>
            <person name="O'Shaughnessy A."/>
            <person name="Dike S."/>
            <person name="McCombie W.R."/>
            <person name="Minx P."/>
            <person name="Cordum H."/>
            <person name="Wilson R."/>
            <person name="Jin W."/>
            <person name="Lee H.R."/>
            <person name="Jiang J."/>
            <person name="Jackson S."/>
        </authorList>
    </citation>
    <scope>NUCLEOTIDE SEQUENCE [LARGE SCALE GENOMIC DNA]</scope>
    <source>
        <strain>cv. Nipponbare</strain>
    </source>
</reference>
<reference key="2">
    <citation type="journal article" date="2005" name="Nature">
        <title>The map-based sequence of the rice genome.</title>
        <authorList>
            <consortium name="International rice genome sequencing project (IRGSP)"/>
        </authorList>
    </citation>
    <scope>NUCLEOTIDE SEQUENCE [LARGE SCALE GENOMIC DNA]</scope>
    <source>
        <strain>cv. Nipponbare</strain>
    </source>
</reference>
<reference key="3">
    <citation type="journal article" date="2008" name="Nucleic Acids Res.">
        <title>The rice annotation project database (RAP-DB): 2008 update.</title>
        <authorList>
            <consortium name="The rice annotation project (RAP)"/>
        </authorList>
    </citation>
    <scope>GENOME REANNOTATION</scope>
    <source>
        <strain>cv. Nipponbare</strain>
    </source>
</reference>
<reference key="4">
    <citation type="journal article" date="2013" name="Rice">
        <title>Improvement of the Oryza sativa Nipponbare reference genome using next generation sequence and optical map data.</title>
        <authorList>
            <person name="Kawahara Y."/>
            <person name="de la Bastide M."/>
            <person name="Hamilton J.P."/>
            <person name="Kanamori H."/>
            <person name="McCombie W.R."/>
            <person name="Ouyang S."/>
            <person name="Schwartz D.C."/>
            <person name="Tanaka T."/>
            <person name="Wu J."/>
            <person name="Zhou S."/>
            <person name="Childs K.L."/>
            <person name="Davidson R.M."/>
            <person name="Lin H."/>
            <person name="Quesada-Ocampo L."/>
            <person name="Vaillancourt B."/>
            <person name="Sakai H."/>
            <person name="Lee S.S."/>
            <person name="Kim J."/>
            <person name="Numa H."/>
            <person name="Itoh T."/>
            <person name="Buell C.R."/>
            <person name="Matsumoto T."/>
        </authorList>
    </citation>
    <scope>GENOME REANNOTATION</scope>
    <source>
        <strain>cv. Nipponbare</strain>
    </source>
</reference>
<reference key="5">
    <citation type="journal article" date="2005" name="PLoS Biol.">
        <title>The genomes of Oryza sativa: a history of duplications.</title>
        <authorList>
            <person name="Yu J."/>
            <person name="Wang J."/>
            <person name="Lin W."/>
            <person name="Li S."/>
            <person name="Li H."/>
            <person name="Zhou J."/>
            <person name="Ni P."/>
            <person name="Dong W."/>
            <person name="Hu S."/>
            <person name="Zeng C."/>
            <person name="Zhang J."/>
            <person name="Zhang Y."/>
            <person name="Li R."/>
            <person name="Xu Z."/>
            <person name="Li S."/>
            <person name="Li X."/>
            <person name="Zheng H."/>
            <person name="Cong L."/>
            <person name="Lin L."/>
            <person name="Yin J."/>
            <person name="Geng J."/>
            <person name="Li G."/>
            <person name="Shi J."/>
            <person name="Liu J."/>
            <person name="Lv H."/>
            <person name="Li J."/>
            <person name="Wang J."/>
            <person name="Deng Y."/>
            <person name="Ran L."/>
            <person name="Shi X."/>
            <person name="Wang X."/>
            <person name="Wu Q."/>
            <person name="Li C."/>
            <person name="Ren X."/>
            <person name="Wang J."/>
            <person name="Wang X."/>
            <person name="Li D."/>
            <person name="Liu D."/>
            <person name="Zhang X."/>
            <person name="Ji Z."/>
            <person name="Zhao W."/>
            <person name="Sun Y."/>
            <person name="Zhang Z."/>
            <person name="Bao J."/>
            <person name="Han Y."/>
            <person name="Dong L."/>
            <person name="Ji J."/>
            <person name="Chen P."/>
            <person name="Wu S."/>
            <person name="Liu J."/>
            <person name="Xiao Y."/>
            <person name="Bu D."/>
            <person name="Tan J."/>
            <person name="Yang L."/>
            <person name="Ye C."/>
            <person name="Zhang J."/>
            <person name="Xu J."/>
            <person name="Zhou Y."/>
            <person name="Yu Y."/>
            <person name="Zhang B."/>
            <person name="Zhuang S."/>
            <person name="Wei H."/>
            <person name="Liu B."/>
            <person name="Lei M."/>
            <person name="Yu H."/>
            <person name="Li Y."/>
            <person name="Xu H."/>
            <person name="Wei S."/>
            <person name="He X."/>
            <person name="Fang L."/>
            <person name="Zhang Z."/>
            <person name="Zhang Y."/>
            <person name="Huang X."/>
            <person name="Su Z."/>
            <person name="Tong W."/>
            <person name="Li J."/>
            <person name="Tong Z."/>
            <person name="Li S."/>
            <person name="Ye J."/>
            <person name="Wang L."/>
            <person name="Fang L."/>
            <person name="Lei T."/>
            <person name="Chen C.-S."/>
            <person name="Chen H.-C."/>
            <person name="Xu Z."/>
            <person name="Li H."/>
            <person name="Huang H."/>
            <person name="Zhang F."/>
            <person name="Xu H."/>
            <person name="Li N."/>
            <person name="Zhao C."/>
            <person name="Li S."/>
            <person name="Dong L."/>
            <person name="Huang Y."/>
            <person name="Li L."/>
            <person name="Xi Y."/>
            <person name="Qi Q."/>
            <person name="Li W."/>
            <person name="Zhang B."/>
            <person name="Hu W."/>
            <person name="Zhang Y."/>
            <person name="Tian X."/>
            <person name="Jiao Y."/>
            <person name="Liang X."/>
            <person name="Jin J."/>
            <person name="Gao L."/>
            <person name="Zheng W."/>
            <person name="Hao B."/>
            <person name="Liu S.-M."/>
            <person name="Wang W."/>
            <person name="Yuan L."/>
            <person name="Cao M."/>
            <person name="McDermott J."/>
            <person name="Samudrala R."/>
            <person name="Wang J."/>
            <person name="Wong G.K.-S."/>
            <person name="Yang H."/>
        </authorList>
    </citation>
    <scope>NUCLEOTIDE SEQUENCE [LARGE SCALE GENOMIC DNA]</scope>
    <source>
        <strain>cv. Nipponbare</strain>
    </source>
</reference>
<reference key="6">
    <citation type="journal article" date="2003" name="Science">
        <title>Collection, mapping, and annotation of over 28,000 cDNA clones from japonica rice.</title>
        <authorList>
            <consortium name="The rice full-length cDNA consortium"/>
        </authorList>
    </citation>
    <scope>NUCLEOTIDE SEQUENCE [LARGE SCALE MRNA]</scope>
    <source>
        <strain>cv. Nipponbare</strain>
    </source>
</reference>